<feature type="chain" id="PRO_1000057321" description="D-alanine--D-alanine ligase">
    <location>
        <begin position="1"/>
        <end position="368"/>
    </location>
</feature>
<feature type="domain" description="ATP-grasp" evidence="2">
    <location>
        <begin position="145"/>
        <end position="348"/>
    </location>
</feature>
<feature type="binding site" evidence="2">
    <location>
        <begin position="175"/>
        <end position="230"/>
    </location>
    <ligand>
        <name>ATP</name>
        <dbReference type="ChEBI" id="CHEBI:30616"/>
    </ligand>
</feature>
<feature type="binding site" evidence="2">
    <location>
        <position position="302"/>
    </location>
    <ligand>
        <name>Mg(2+)</name>
        <dbReference type="ChEBI" id="CHEBI:18420"/>
        <label>1</label>
    </ligand>
</feature>
<feature type="binding site" evidence="2">
    <location>
        <position position="315"/>
    </location>
    <ligand>
        <name>Mg(2+)</name>
        <dbReference type="ChEBI" id="CHEBI:18420"/>
        <label>1</label>
    </ligand>
</feature>
<feature type="binding site" evidence="2">
    <location>
        <position position="315"/>
    </location>
    <ligand>
        <name>Mg(2+)</name>
        <dbReference type="ChEBI" id="CHEBI:18420"/>
        <label>2</label>
    </ligand>
</feature>
<feature type="binding site" evidence="2">
    <location>
        <position position="317"/>
    </location>
    <ligand>
        <name>Mg(2+)</name>
        <dbReference type="ChEBI" id="CHEBI:18420"/>
        <label>2</label>
    </ligand>
</feature>
<proteinExistence type="inferred from homology"/>
<organism>
    <name type="scientific">Shouchella clausii (strain KSM-K16)</name>
    <name type="common">Alkalihalobacillus clausii</name>
    <dbReference type="NCBI Taxonomy" id="66692"/>
    <lineage>
        <taxon>Bacteria</taxon>
        <taxon>Bacillati</taxon>
        <taxon>Bacillota</taxon>
        <taxon>Bacilli</taxon>
        <taxon>Bacillales</taxon>
        <taxon>Bacillaceae</taxon>
        <taxon>Shouchella</taxon>
    </lineage>
</organism>
<accession>Q5WDW9</accession>
<evidence type="ECO:0000250" key="1"/>
<evidence type="ECO:0000255" key="2">
    <source>
        <dbReference type="HAMAP-Rule" id="MF_00047"/>
    </source>
</evidence>
<comment type="function">
    <text evidence="2">Cell wall formation.</text>
</comment>
<comment type="catalytic activity">
    <reaction evidence="2">
        <text>2 D-alanine + ATP = D-alanyl-D-alanine + ADP + phosphate + H(+)</text>
        <dbReference type="Rhea" id="RHEA:11224"/>
        <dbReference type="ChEBI" id="CHEBI:15378"/>
        <dbReference type="ChEBI" id="CHEBI:30616"/>
        <dbReference type="ChEBI" id="CHEBI:43474"/>
        <dbReference type="ChEBI" id="CHEBI:57416"/>
        <dbReference type="ChEBI" id="CHEBI:57822"/>
        <dbReference type="ChEBI" id="CHEBI:456216"/>
        <dbReference type="EC" id="6.3.2.4"/>
    </reaction>
</comment>
<comment type="cofactor">
    <cofactor evidence="1">
        <name>Mg(2+)</name>
        <dbReference type="ChEBI" id="CHEBI:18420"/>
    </cofactor>
    <cofactor evidence="1">
        <name>Mn(2+)</name>
        <dbReference type="ChEBI" id="CHEBI:29035"/>
    </cofactor>
    <text evidence="1">Binds 2 magnesium or manganese ions per subunit.</text>
</comment>
<comment type="pathway">
    <text evidence="2">Cell wall biogenesis; peptidoglycan biosynthesis.</text>
</comment>
<comment type="subcellular location">
    <subcellularLocation>
        <location evidence="2">Cytoplasm</location>
    </subcellularLocation>
</comment>
<comment type="similarity">
    <text evidence="2">Belongs to the D-alanine--D-alanine ligase family.</text>
</comment>
<keyword id="KW-0067">ATP-binding</keyword>
<keyword id="KW-0133">Cell shape</keyword>
<keyword id="KW-0961">Cell wall biogenesis/degradation</keyword>
<keyword id="KW-0963">Cytoplasm</keyword>
<keyword id="KW-0436">Ligase</keyword>
<keyword id="KW-0460">Magnesium</keyword>
<keyword id="KW-0464">Manganese</keyword>
<keyword id="KW-0479">Metal-binding</keyword>
<keyword id="KW-0547">Nucleotide-binding</keyword>
<keyword id="KW-0573">Peptidoglycan synthesis</keyword>
<keyword id="KW-1185">Reference proteome</keyword>
<gene>
    <name evidence="2" type="primary">ddl</name>
    <name type="ordered locus">ABC2907</name>
</gene>
<protein>
    <recommendedName>
        <fullName evidence="2">D-alanine--D-alanine ligase</fullName>
        <ecNumber evidence="2">6.3.2.4</ecNumber>
    </recommendedName>
    <alternativeName>
        <fullName evidence="2">D-Ala-D-Ala ligase</fullName>
    </alternativeName>
    <alternativeName>
        <fullName evidence="2">D-alanylalanine synthetase</fullName>
    </alternativeName>
</protein>
<sequence length="368" mass="40081">MAKKRVGIIFGGKSAEHEVSLQSAKNIVEAIDKDRFDVTLIGIDKQGQWHINEASNFLLNADNPALIELNKSNQGVALIPGKEDRQLVGTANQSVLDQLDVVFPIVHGTLGEDGSLQGMFRLANLPFVGSNVLGSAVSMDKDIAKRLLQGAGLHVASGLTFTRAAKETIDFESIADQLGLPLFIKPANQGSSVGVNKATTEAEFTAAIEEAFSYDHKVLIEAAIKGREIECAVLGNDYPKASTCGEILPQDGFYSYDAKYIDEDGAKLAIPADLPEDVNRRIQDIAIQAYKTLNCEGLARVDVFLTETGEVIINEVNTLPGFTKISMYPKLWEASGVSYQDLITTLIELAIERHERDKQLKSSVFDRN</sequence>
<dbReference type="EC" id="6.3.2.4" evidence="2"/>
<dbReference type="EMBL" id="AP006627">
    <property type="protein sequence ID" value="BAD65441.1"/>
    <property type="molecule type" value="Genomic_DNA"/>
</dbReference>
<dbReference type="SMR" id="Q5WDW9"/>
<dbReference type="STRING" id="66692.ABC2907"/>
<dbReference type="KEGG" id="bcl:ABC2907"/>
<dbReference type="eggNOG" id="COG1181">
    <property type="taxonomic scope" value="Bacteria"/>
</dbReference>
<dbReference type="HOGENOM" id="CLU_039268_0_1_9"/>
<dbReference type="OrthoDB" id="9813261at2"/>
<dbReference type="UniPathway" id="UPA00219"/>
<dbReference type="Proteomes" id="UP000001168">
    <property type="component" value="Chromosome"/>
</dbReference>
<dbReference type="GO" id="GO:0005829">
    <property type="term" value="C:cytosol"/>
    <property type="evidence" value="ECO:0007669"/>
    <property type="project" value="TreeGrafter"/>
</dbReference>
<dbReference type="GO" id="GO:0005524">
    <property type="term" value="F:ATP binding"/>
    <property type="evidence" value="ECO:0007669"/>
    <property type="project" value="UniProtKB-KW"/>
</dbReference>
<dbReference type="GO" id="GO:0008716">
    <property type="term" value="F:D-alanine-D-alanine ligase activity"/>
    <property type="evidence" value="ECO:0007669"/>
    <property type="project" value="UniProtKB-UniRule"/>
</dbReference>
<dbReference type="GO" id="GO:0046872">
    <property type="term" value="F:metal ion binding"/>
    <property type="evidence" value="ECO:0007669"/>
    <property type="project" value="UniProtKB-KW"/>
</dbReference>
<dbReference type="GO" id="GO:0071555">
    <property type="term" value="P:cell wall organization"/>
    <property type="evidence" value="ECO:0007669"/>
    <property type="project" value="UniProtKB-KW"/>
</dbReference>
<dbReference type="GO" id="GO:0009252">
    <property type="term" value="P:peptidoglycan biosynthetic process"/>
    <property type="evidence" value="ECO:0007669"/>
    <property type="project" value="UniProtKB-UniRule"/>
</dbReference>
<dbReference type="GO" id="GO:0008360">
    <property type="term" value="P:regulation of cell shape"/>
    <property type="evidence" value="ECO:0007669"/>
    <property type="project" value="UniProtKB-KW"/>
</dbReference>
<dbReference type="FunFam" id="3.30.1490.20:FF:000007">
    <property type="entry name" value="D-alanine--D-alanine ligase"/>
    <property type="match status" value="1"/>
</dbReference>
<dbReference type="FunFam" id="3.30.470.20:FF:000008">
    <property type="entry name" value="D-alanine--D-alanine ligase"/>
    <property type="match status" value="1"/>
</dbReference>
<dbReference type="Gene3D" id="3.40.50.20">
    <property type="match status" value="1"/>
</dbReference>
<dbReference type="Gene3D" id="3.30.1490.20">
    <property type="entry name" value="ATP-grasp fold, A domain"/>
    <property type="match status" value="1"/>
</dbReference>
<dbReference type="Gene3D" id="3.30.470.20">
    <property type="entry name" value="ATP-grasp fold, B domain"/>
    <property type="match status" value="1"/>
</dbReference>
<dbReference type="HAMAP" id="MF_00047">
    <property type="entry name" value="Dala_Dala_lig"/>
    <property type="match status" value="1"/>
</dbReference>
<dbReference type="InterPro" id="IPR011761">
    <property type="entry name" value="ATP-grasp"/>
</dbReference>
<dbReference type="InterPro" id="IPR013815">
    <property type="entry name" value="ATP_grasp_subdomain_1"/>
</dbReference>
<dbReference type="InterPro" id="IPR000291">
    <property type="entry name" value="D-Ala_lig_Van_CS"/>
</dbReference>
<dbReference type="InterPro" id="IPR005905">
    <property type="entry name" value="D_ala_D_ala"/>
</dbReference>
<dbReference type="InterPro" id="IPR011095">
    <property type="entry name" value="Dala_Dala_lig_C"/>
</dbReference>
<dbReference type="InterPro" id="IPR011127">
    <property type="entry name" value="Dala_Dala_lig_N"/>
</dbReference>
<dbReference type="InterPro" id="IPR016185">
    <property type="entry name" value="PreATP-grasp_dom_sf"/>
</dbReference>
<dbReference type="NCBIfam" id="TIGR01205">
    <property type="entry name" value="D_ala_D_alaTIGR"/>
    <property type="match status" value="1"/>
</dbReference>
<dbReference type="NCBIfam" id="NF002378">
    <property type="entry name" value="PRK01372.1"/>
    <property type="match status" value="1"/>
</dbReference>
<dbReference type="NCBIfam" id="NF002525">
    <property type="entry name" value="PRK01966.1-1"/>
    <property type="match status" value="1"/>
</dbReference>
<dbReference type="NCBIfam" id="NF002528">
    <property type="entry name" value="PRK01966.1-4"/>
    <property type="match status" value="1"/>
</dbReference>
<dbReference type="PANTHER" id="PTHR23132">
    <property type="entry name" value="D-ALANINE--D-ALANINE LIGASE"/>
    <property type="match status" value="1"/>
</dbReference>
<dbReference type="PANTHER" id="PTHR23132:SF25">
    <property type="entry name" value="D-ALANINE--D-ALANINE LIGASE A"/>
    <property type="match status" value="1"/>
</dbReference>
<dbReference type="Pfam" id="PF07478">
    <property type="entry name" value="Dala_Dala_lig_C"/>
    <property type="match status" value="1"/>
</dbReference>
<dbReference type="Pfam" id="PF01820">
    <property type="entry name" value="Dala_Dala_lig_N"/>
    <property type="match status" value="1"/>
</dbReference>
<dbReference type="PIRSF" id="PIRSF039102">
    <property type="entry name" value="Ddl/VanB"/>
    <property type="match status" value="1"/>
</dbReference>
<dbReference type="SUPFAM" id="SSF56059">
    <property type="entry name" value="Glutathione synthetase ATP-binding domain-like"/>
    <property type="match status" value="1"/>
</dbReference>
<dbReference type="SUPFAM" id="SSF52440">
    <property type="entry name" value="PreATP-grasp domain"/>
    <property type="match status" value="1"/>
</dbReference>
<dbReference type="PROSITE" id="PS50975">
    <property type="entry name" value="ATP_GRASP"/>
    <property type="match status" value="1"/>
</dbReference>
<dbReference type="PROSITE" id="PS00843">
    <property type="entry name" value="DALA_DALA_LIGASE_1"/>
    <property type="match status" value="1"/>
</dbReference>
<dbReference type="PROSITE" id="PS00844">
    <property type="entry name" value="DALA_DALA_LIGASE_2"/>
    <property type="match status" value="1"/>
</dbReference>
<name>DDL_SHOC1</name>
<reference key="1">
    <citation type="submission" date="2003-10" db="EMBL/GenBank/DDBJ databases">
        <title>The complete genome sequence of the alkaliphilic Bacillus clausii KSM-K16.</title>
        <authorList>
            <person name="Takaki Y."/>
            <person name="Kageyama Y."/>
            <person name="Shimamura S."/>
            <person name="Suzuki H."/>
            <person name="Nishi S."/>
            <person name="Hatada Y."/>
            <person name="Kawai S."/>
            <person name="Ito S."/>
            <person name="Horikoshi K."/>
        </authorList>
    </citation>
    <scope>NUCLEOTIDE SEQUENCE [LARGE SCALE GENOMIC DNA]</scope>
    <source>
        <strain>KSM-K16</strain>
    </source>
</reference>